<evidence type="ECO:0000255" key="1">
    <source>
        <dbReference type="HAMAP-Rule" id="MF_01132"/>
    </source>
</evidence>
<accession>Q5XBX9</accession>
<sequence>MVTLFLSPSCTSCRKARAWLVKHEVDFQEHNIITSPLSRDELMSILSFTENGTEDIISTRSKVFQKLDIDVEELSISGLIDLIAKNPSLLRRPIIMDQKRMQIGFNEDEIRAFLSRDYRKQELRQATIKAEIEG</sequence>
<protein>
    <recommendedName>
        <fullName evidence="1">Global transcriptional regulator Spx</fullName>
    </recommendedName>
</protein>
<dbReference type="EMBL" id="CP000003">
    <property type="protein sequence ID" value="AAT87084.1"/>
    <property type="molecule type" value="Genomic_DNA"/>
</dbReference>
<dbReference type="RefSeq" id="WP_011184559.1">
    <property type="nucleotide sequence ID" value="NC_006086.1"/>
</dbReference>
<dbReference type="SMR" id="Q5XBX9"/>
<dbReference type="KEGG" id="spa:M6_Spy0949"/>
<dbReference type="HOGENOM" id="CLU_116644_1_1_9"/>
<dbReference type="Proteomes" id="UP000001167">
    <property type="component" value="Chromosome"/>
</dbReference>
<dbReference type="GO" id="GO:0005737">
    <property type="term" value="C:cytoplasm"/>
    <property type="evidence" value="ECO:0007669"/>
    <property type="project" value="UniProtKB-SubCell"/>
</dbReference>
<dbReference type="GO" id="GO:0045892">
    <property type="term" value="P:negative regulation of DNA-templated transcription"/>
    <property type="evidence" value="ECO:0007669"/>
    <property type="project" value="InterPro"/>
</dbReference>
<dbReference type="CDD" id="cd03032">
    <property type="entry name" value="ArsC_Spx"/>
    <property type="match status" value="1"/>
</dbReference>
<dbReference type="Gene3D" id="3.40.30.10">
    <property type="entry name" value="Glutaredoxin"/>
    <property type="match status" value="1"/>
</dbReference>
<dbReference type="HAMAP" id="MF_01132">
    <property type="entry name" value="Spx"/>
    <property type="match status" value="1"/>
</dbReference>
<dbReference type="InterPro" id="IPR006660">
    <property type="entry name" value="Arsenate_reductase-like"/>
</dbReference>
<dbReference type="InterPro" id="IPR023731">
    <property type="entry name" value="Spx"/>
</dbReference>
<dbReference type="InterPro" id="IPR036249">
    <property type="entry name" value="Thioredoxin-like_sf"/>
</dbReference>
<dbReference type="InterPro" id="IPR006504">
    <property type="entry name" value="Tscrpt_reg_Spx/MgsR"/>
</dbReference>
<dbReference type="NCBIfam" id="TIGR01617">
    <property type="entry name" value="arsC_related"/>
    <property type="match status" value="1"/>
</dbReference>
<dbReference type="NCBIfam" id="NF002459">
    <property type="entry name" value="PRK01655.1"/>
    <property type="match status" value="1"/>
</dbReference>
<dbReference type="PANTHER" id="PTHR30041">
    <property type="entry name" value="ARSENATE REDUCTASE"/>
    <property type="match status" value="1"/>
</dbReference>
<dbReference type="PANTHER" id="PTHR30041:SF7">
    <property type="entry name" value="GLOBAL TRANSCRIPTIONAL REGULATOR SPX"/>
    <property type="match status" value="1"/>
</dbReference>
<dbReference type="Pfam" id="PF03960">
    <property type="entry name" value="ArsC"/>
    <property type="match status" value="1"/>
</dbReference>
<dbReference type="SUPFAM" id="SSF52833">
    <property type="entry name" value="Thioredoxin-like"/>
    <property type="match status" value="1"/>
</dbReference>
<dbReference type="PROSITE" id="PS51353">
    <property type="entry name" value="ARSC"/>
    <property type="match status" value="1"/>
</dbReference>
<proteinExistence type="inferred from homology"/>
<organism>
    <name type="scientific">Streptococcus pyogenes serotype M6 (strain ATCC BAA-946 / MGAS10394)</name>
    <dbReference type="NCBI Taxonomy" id="286636"/>
    <lineage>
        <taxon>Bacteria</taxon>
        <taxon>Bacillati</taxon>
        <taxon>Bacillota</taxon>
        <taxon>Bacilli</taxon>
        <taxon>Lactobacillales</taxon>
        <taxon>Streptococcaceae</taxon>
        <taxon>Streptococcus</taxon>
    </lineage>
</organism>
<name>SPX_STRP6</name>
<comment type="function">
    <text evidence="1">Global transcriptional regulator that plays a key role in stress response and exerts either positive or negative regulation of genes. Acts by interacting with the C-terminal domain of the alpha subunit of the RNA polymerase (RNAP). This interaction can enhance binding of RNAP to the promoter region of target genes and stimulate their transcription, or block interaction of RNAP with activator.</text>
</comment>
<comment type="subunit">
    <text evidence="1">Interacts with the C-terminal domain of the alpha subunit of the RNAP.</text>
</comment>
<comment type="subcellular location">
    <subcellularLocation>
        <location evidence="1">Cytoplasm</location>
    </subcellularLocation>
</comment>
<comment type="similarity">
    <text evidence="1">Belongs to the ArsC family. Spx subfamily.</text>
</comment>
<gene>
    <name evidence="1" type="primary">spx</name>
    <name type="ordered locus">M6_Spy0949</name>
</gene>
<feature type="chain" id="PRO_0000162579" description="Global transcriptional regulator Spx">
    <location>
        <begin position="1"/>
        <end position="134"/>
    </location>
</feature>
<feature type="disulfide bond" description="Redox-active" evidence="1">
    <location>
        <begin position="10"/>
        <end position="13"/>
    </location>
</feature>
<keyword id="KW-0963">Cytoplasm</keyword>
<keyword id="KW-1015">Disulfide bond</keyword>
<keyword id="KW-0676">Redox-active center</keyword>
<keyword id="KW-0804">Transcription</keyword>
<keyword id="KW-0805">Transcription regulation</keyword>
<reference key="1">
    <citation type="journal article" date="2004" name="J. Infect. Dis.">
        <title>Progress toward characterization of the group A Streptococcus metagenome: complete genome sequence of a macrolide-resistant serotype M6 strain.</title>
        <authorList>
            <person name="Banks D.J."/>
            <person name="Porcella S.F."/>
            <person name="Barbian K.D."/>
            <person name="Beres S.B."/>
            <person name="Philips L.E."/>
            <person name="Voyich J.M."/>
            <person name="DeLeo F.R."/>
            <person name="Martin J.M."/>
            <person name="Somerville G.A."/>
            <person name="Musser J.M."/>
        </authorList>
    </citation>
    <scope>NUCLEOTIDE SEQUENCE [LARGE SCALE GENOMIC DNA]</scope>
    <source>
        <strain>ATCC BAA-946 / MGAS10394</strain>
    </source>
</reference>